<dbReference type="EMBL" id="AY261366">
    <property type="status" value="NOT_ANNOTATED_CDS"/>
    <property type="molecule type" value="Genomic_DNA"/>
</dbReference>
<dbReference type="Proteomes" id="UP000000858">
    <property type="component" value="Segment"/>
</dbReference>
<dbReference type="GO" id="GO:0020002">
    <property type="term" value="C:host cell plasma membrane"/>
    <property type="evidence" value="ECO:0007669"/>
    <property type="project" value="UniProtKB-SubCell"/>
</dbReference>
<dbReference type="GO" id="GO:0016020">
    <property type="term" value="C:membrane"/>
    <property type="evidence" value="ECO:0007669"/>
    <property type="project" value="UniProtKB-KW"/>
</dbReference>
<dbReference type="GO" id="GO:0055036">
    <property type="term" value="C:virion membrane"/>
    <property type="evidence" value="ECO:0007669"/>
    <property type="project" value="UniProtKB-SubCell"/>
</dbReference>
<feature type="chain" id="PRO_0000373372" description="Envelope protein 167">
    <location>
        <begin position="1"/>
        <end position="176"/>
    </location>
</feature>
<feature type="topological domain" description="Intravirion" evidence="2">
    <location>
        <position position="1"/>
    </location>
</feature>
<feature type="transmembrane region" description="Helical" evidence="2">
    <location>
        <begin position="2"/>
        <end position="22"/>
    </location>
</feature>
<feature type="topological domain" description="Virion surface" evidence="2">
    <location>
        <begin position="23"/>
        <end position="176"/>
    </location>
</feature>
<gene>
    <name type="ordered locus">War-167</name>
</gene>
<organism>
    <name type="scientific">African swine fever virus (isolate Warthog/Namibia/Wart80/1980)</name>
    <name type="common">ASFV</name>
    <dbReference type="NCBI Taxonomy" id="561444"/>
    <lineage>
        <taxon>Viruses</taxon>
        <taxon>Varidnaviria</taxon>
        <taxon>Bamfordvirae</taxon>
        <taxon>Nucleocytoviricota</taxon>
        <taxon>Pokkesviricetes</taxon>
        <taxon>Asfuvirales</taxon>
        <taxon>Asfarviridae</taxon>
        <taxon>Asfivirus</taxon>
        <taxon>African swine fever virus</taxon>
    </lineage>
</organism>
<proteinExistence type="evidence at transcript level"/>
<accession>P0C9W8</accession>
<protein>
    <recommendedName>
        <fullName>Envelope protein 167</fullName>
    </recommendedName>
</protein>
<evidence type="ECO:0000250" key="1"/>
<evidence type="ECO:0000255" key="2"/>
<evidence type="ECO:0000305" key="3"/>
<name>EV167_ASFWA</name>
<organismHost>
    <name type="scientific">Ornithodoros</name>
    <name type="common">relapsing fever ticks</name>
    <dbReference type="NCBI Taxonomy" id="6937"/>
</organismHost>
<organismHost>
    <name type="scientific">Phacochoerus aethiopicus</name>
    <name type="common">Warthog</name>
    <dbReference type="NCBI Taxonomy" id="85517"/>
</organismHost>
<organismHost>
    <name type="scientific">Phacochoerus africanus</name>
    <name type="common">Warthog</name>
    <dbReference type="NCBI Taxonomy" id="41426"/>
</organismHost>
<organismHost>
    <name type="scientific">Potamochoerus larvatus</name>
    <name type="common">Bushpig</name>
    <dbReference type="NCBI Taxonomy" id="273792"/>
</organismHost>
<organismHost>
    <name type="scientific">Sus scrofa</name>
    <name type="common">Pig</name>
    <dbReference type="NCBI Taxonomy" id="9823"/>
</organismHost>
<comment type="subcellular location">
    <subcellularLocation>
        <location>Virion membrane</location>
        <topology>Single-pass membrane protein</topology>
    </subcellularLocation>
    <subcellularLocation>
        <location evidence="1">Host cell membrane</location>
        <topology evidence="1">Single-pass membrane protein</topology>
    </subcellularLocation>
</comment>
<comment type="induction">
    <text>Early structural protein.</text>
</comment>
<comment type="similarity">
    <text evidence="3">Belongs to the asfivirus envelope protein p22 family.</text>
</comment>
<sequence length="176" mass="19925">MYLVLLIAIILFITIILVIFLISGLFYPEQNPLLPISPPKKKCKIDVDCKDNGHHCVGGFCTKMNCLEAAKYDIKGIKLDPNIRSCNYTPKFYKFSSTADPQSPFGKSRIEYGELYDPHSGEEFCESLCANYPGCISWEYDQISGKTTGNCYFYRNPHPALKYKSDAVMAIPRKVL</sequence>
<keyword id="KW-0244">Early protein</keyword>
<keyword id="KW-1032">Host cell membrane</keyword>
<keyword id="KW-1043">Host membrane</keyword>
<keyword id="KW-0472">Membrane</keyword>
<keyword id="KW-0812">Transmembrane</keyword>
<keyword id="KW-1133">Transmembrane helix</keyword>
<keyword id="KW-0946">Virion</keyword>
<reference key="1">
    <citation type="submission" date="2003-03" db="EMBL/GenBank/DDBJ databases">
        <title>African swine fever virus genomes.</title>
        <authorList>
            <person name="Kutish G.F."/>
            <person name="Rock D.L."/>
        </authorList>
    </citation>
    <scope>NUCLEOTIDE SEQUENCE [LARGE SCALE GENOMIC DNA]</scope>
</reference>